<gene>
    <name evidence="2" type="primary">infB</name>
    <name type="ordered locus">Maeo_0901</name>
</gene>
<feature type="chain" id="PRO_1000008270" description="Probable translation initiation factor IF-2">
    <location>
        <begin position="1"/>
        <end position="598"/>
    </location>
</feature>
<feature type="domain" description="tr-type G">
    <location>
        <begin position="3"/>
        <end position="223"/>
    </location>
</feature>
<feature type="region of interest" description="G1" evidence="1">
    <location>
        <begin position="12"/>
        <end position="19"/>
    </location>
</feature>
<feature type="region of interest" description="G2" evidence="1">
    <location>
        <begin position="37"/>
        <end position="41"/>
    </location>
</feature>
<feature type="region of interest" description="G3" evidence="1">
    <location>
        <begin position="76"/>
        <end position="79"/>
    </location>
</feature>
<feature type="region of interest" description="G4" evidence="1">
    <location>
        <begin position="130"/>
        <end position="133"/>
    </location>
</feature>
<feature type="region of interest" description="G5" evidence="1">
    <location>
        <begin position="200"/>
        <end position="202"/>
    </location>
</feature>
<feature type="binding site" evidence="2">
    <location>
        <begin position="12"/>
        <end position="19"/>
    </location>
    <ligand>
        <name>GTP</name>
        <dbReference type="ChEBI" id="CHEBI:37565"/>
    </ligand>
</feature>
<feature type="binding site" evidence="2">
    <location>
        <begin position="76"/>
        <end position="80"/>
    </location>
    <ligand>
        <name>GTP</name>
        <dbReference type="ChEBI" id="CHEBI:37565"/>
    </ligand>
</feature>
<feature type="binding site" evidence="2">
    <location>
        <begin position="130"/>
        <end position="133"/>
    </location>
    <ligand>
        <name>GTP</name>
        <dbReference type="ChEBI" id="CHEBI:37565"/>
    </ligand>
</feature>
<sequence>MALRCPIVSVLGHVDHGKTSLLDKIRKTRVTQREAGGITQHIGASEIPIDIIKKISKDLIKMLGANLTIPGILVIDTPGHAAFTSLRKRGGALADIAVLIVDINEGFMPQTIEALNILKQNKTPFVVAANKIDRLPGWSSVDGAFITNFNEQKQHPNALTEFEIKLYENVIAPLAERGFEADLFSRVKDVSKTINIVPISAMTGEGIPDLLVMISGLAQRFMEQNLKLNVEGYAKGTVLEVKEERGLGKTMDAIIYDGVAKRGDYIVIGNPDGIVVSRIKALLKPKALDEMRDPRDKFKTMNEISAATGLKISAPDLDNIIAGSPLRIVPKNMVEQAKAEIVEEIEETAIQLDEEGIIIKADTLGSLEALATELRKVGAKIKKAEVGDVSKKDVIEASSYAQTNPLNGAIILFNSKLLADAKSEVEKYEIKTFEGDIIYKLVEDYEEWTKEMKELLKSDEFNRLTKPAILRIIPGCIFNKTKPAICGVEVVYGTLRVGCSVVDEQGKRLGTVKEIKDKKQENIKEAKVGMEVPISIDGTVILGRHIGEDDIMYVELPEPEVRILSHNYMGELRGDEREAFERYVELKRKLENNPFWGI</sequence>
<proteinExistence type="inferred from homology"/>
<organism>
    <name type="scientific">Methanococcus aeolicus (strain ATCC BAA-1280 / DSM 17508 / OCM 812 / Nankai-3)</name>
    <dbReference type="NCBI Taxonomy" id="419665"/>
    <lineage>
        <taxon>Archaea</taxon>
        <taxon>Methanobacteriati</taxon>
        <taxon>Methanobacteriota</taxon>
        <taxon>Methanomada group</taxon>
        <taxon>Methanococci</taxon>
        <taxon>Methanococcales</taxon>
        <taxon>Methanococcaceae</taxon>
        <taxon>Methanococcus</taxon>
    </lineage>
</organism>
<reference key="1">
    <citation type="submission" date="2007-06" db="EMBL/GenBank/DDBJ databases">
        <title>Complete sequence of Methanococcus aeolicus Nankai-3.</title>
        <authorList>
            <consortium name="US DOE Joint Genome Institute"/>
            <person name="Copeland A."/>
            <person name="Lucas S."/>
            <person name="Lapidus A."/>
            <person name="Barry K."/>
            <person name="Glavina del Rio T."/>
            <person name="Dalin E."/>
            <person name="Tice H."/>
            <person name="Pitluck S."/>
            <person name="Chain P."/>
            <person name="Malfatti S."/>
            <person name="Shin M."/>
            <person name="Vergez L."/>
            <person name="Schmutz J."/>
            <person name="Larimer F."/>
            <person name="Land M."/>
            <person name="Hauser L."/>
            <person name="Kyrpides N."/>
            <person name="Lykidis A."/>
            <person name="Sieprawska-Lupa M."/>
            <person name="Whitman W.B."/>
            <person name="Richardson P."/>
        </authorList>
    </citation>
    <scope>NUCLEOTIDE SEQUENCE [LARGE SCALE GENOMIC DNA]</scope>
    <source>
        <strain>ATCC BAA-1280 / DSM 17508 / OCM 812 / Nankai-3</strain>
    </source>
</reference>
<accession>A6UVG0</accession>
<protein>
    <recommendedName>
        <fullName evidence="2">Probable translation initiation factor IF-2</fullName>
    </recommendedName>
</protein>
<evidence type="ECO:0000250" key="1"/>
<evidence type="ECO:0000255" key="2">
    <source>
        <dbReference type="HAMAP-Rule" id="MF_00100"/>
    </source>
</evidence>
<keyword id="KW-0342">GTP-binding</keyword>
<keyword id="KW-0396">Initiation factor</keyword>
<keyword id="KW-0547">Nucleotide-binding</keyword>
<keyword id="KW-0648">Protein biosynthesis</keyword>
<name>IF2P_META3</name>
<comment type="function">
    <text evidence="2">Function in general translation initiation by promoting the binding of the formylmethionine-tRNA to ribosomes. Seems to function along with eIF-2.</text>
</comment>
<comment type="similarity">
    <text evidence="2">Belongs to the TRAFAC class translation factor GTPase superfamily. Classic translation factor GTPase family. IF-2 subfamily.</text>
</comment>
<dbReference type="EMBL" id="CP000743">
    <property type="protein sequence ID" value="ABR56482.1"/>
    <property type="molecule type" value="Genomic_DNA"/>
</dbReference>
<dbReference type="RefSeq" id="WP_011973614.1">
    <property type="nucleotide sequence ID" value="NC_009635.1"/>
</dbReference>
<dbReference type="SMR" id="A6UVG0"/>
<dbReference type="STRING" id="419665.Maeo_0901"/>
<dbReference type="GeneID" id="5327717"/>
<dbReference type="KEGG" id="mae:Maeo_0901"/>
<dbReference type="eggNOG" id="arCOG01560">
    <property type="taxonomic scope" value="Archaea"/>
</dbReference>
<dbReference type="HOGENOM" id="CLU_002656_3_3_2"/>
<dbReference type="OrthoDB" id="30957at2157"/>
<dbReference type="Proteomes" id="UP000001106">
    <property type="component" value="Chromosome"/>
</dbReference>
<dbReference type="GO" id="GO:0005737">
    <property type="term" value="C:cytoplasm"/>
    <property type="evidence" value="ECO:0007669"/>
    <property type="project" value="TreeGrafter"/>
</dbReference>
<dbReference type="GO" id="GO:0005525">
    <property type="term" value="F:GTP binding"/>
    <property type="evidence" value="ECO:0007669"/>
    <property type="project" value="UniProtKB-KW"/>
</dbReference>
<dbReference type="GO" id="GO:0003924">
    <property type="term" value="F:GTPase activity"/>
    <property type="evidence" value="ECO:0007669"/>
    <property type="project" value="UniProtKB-UniRule"/>
</dbReference>
<dbReference type="GO" id="GO:0003743">
    <property type="term" value="F:translation initiation factor activity"/>
    <property type="evidence" value="ECO:0007669"/>
    <property type="project" value="UniProtKB-UniRule"/>
</dbReference>
<dbReference type="CDD" id="cd03703">
    <property type="entry name" value="aeIF5B_II"/>
    <property type="match status" value="1"/>
</dbReference>
<dbReference type="CDD" id="cd16266">
    <property type="entry name" value="IF2_aeIF5B_IV"/>
    <property type="match status" value="1"/>
</dbReference>
<dbReference type="CDD" id="cd01887">
    <property type="entry name" value="IF2_eIF5B"/>
    <property type="match status" value="1"/>
</dbReference>
<dbReference type="FunFam" id="3.40.50.300:FF:000112">
    <property type="entry name" value="Eukaryotic translation initiation factor 5B"/>
    <property type="match status" value="1"/>
</dbReference>
<dbReference type="FunFam" id="3.40.50.10050:FF:000001">
    <property type="entry name" value="Translation initiation factor IF-2"/>
    <property type="match status" value="1"/>
</dbReference>
<dbReference type="Gene3D" id="3.40.50.300">
    <property type="entry name" value="P-loop containing nucleotide triphosphate hydrolases"/>
    <property type="match status" value="1"/>
</dbReference>
<dbReference type="Gene3D" id="2.40.30.10">
    <property type="entry name" value="Translation factors"/>
    <property type="match status" value="2"/>
</dbReference>
<dbReference type="Gene3D" id="3.40.50.10050">
    <property type="entry name" value="Translation initiation factor IF- 2, domain 3"/>
    <property type="match status" value="1"/>
</dbReference>
<dbReference type="HAMAP" id="MF_00100_A">
    <property type="entry name" value="IF_2_A"/>
    <property type="match status" value="1"/>
</dbReference>
<dbReference type="InterPro" id="IPR029459">
    <property type="entry name" value="EFTU-type"/>
</dbReference>
<dbReference type="InterPro" id="IPR027417">
    <property type="entry name" value="P-loop_NTPase"/>
</dbReference>
<dbReference type="InterPro" id="IPR005225">
    <property type="entry name" value="Small_GTP-bd"/>
</dbReference>
<dbReference type="InterPro" id="IPR000795">
    <property type="entry name" value="T_Tr_GTP-bd_dom"/>
</dbReference>
<dbReference type="InterPro" id="IPR004544">
    <property type="entry name" value="TF_aIF-2_arc"/>
</dbReference>
<dbReference type="InterPro" id="IPR015760">
    <property type="entry name" value="TIF_IF2"/>
</dbReference>
<dbReference type="InterPro" id="IPR023115">
    <property type="entry name" value="TIF_IF2_dom3"/>
</dbReference>
<dbReference type="InterPro" id="IPR036925">
    <property type="entry name" value="TIF_IF2_dom3_sf"/>
</dbReference>
<dbReference type="InterPro" id="IPR009000">
    <property type="entry name" value="Transl_B-barrel_sf"/>
</dbReference>
<dbReference type="NCBIfam" id="TIGR00491">
    <property type="entry name" value="aIF-2"/>
    <property type="match status" value="1"/>
</dbReference>
<dbReference type="NCBIfam" id="NF003078">
    <property type="entry name" value="PRK04004.1"/>
    <property type="match status" value="1"/>
</dbReference>
<dbReference type="NCBIfam" id="NF011418">
    <property type="entry name" value="PRK14845.1"/>
    <property type="match status" value="1"/>
</dbReference>
<dbReference type="NCBIfam" id="TIGR00231">
    <property type="entry name" value="small_GTP"/>
    <property type="match status" value="1"/>
</dbReference>
<dbReference type="PANTHER" id="PTHR43381:SF4">
    <property type="entry name" value="EUKARYOTIC TRANSLATION INITIATION FACTOR 5B"/>
    <property type="match status" value="1"/>
</dbReference>
<dbReference type="PANTHER" id="PTHR43381">
    <property type="entry name" value="TRANSLATION INITIATION FACTOR IF-2-RELATED"/>
    <property type="match status" value="1"/>
</dbReference>
<dbReference type="Pfam" id="PF00009">
    <property type="entry name" value="GTP_EFTU"/>
    <property type="match status" value="1"/>
</dbReference>
<dbReference type="Pfam" id="PF14578">
    <property type="entry name" value="GTP_EFTU_D4"/>
    <property type="match status" value="1"/>
</dbReference>
<dbReference type="Pfam" id="PF11987">
    <property type="entry name" value="IF-2"/>
    <property type="match status" value="1"/>
</dbReference>
<dbReference type="PRINTS" id="PR00315">
    <property type="entry name" value="ELONGATNFCT"/>
</dbReference>
<dbReference type="SUPFAM" id="SSF52156">
    <property type="entry name" value="Initiation factor IF2/eIF5b, domain 3"/>
    <property type="match status" value="1"/>
</dbReference>
<dbReference type="SUPFAM" id="SSF52540">
    <property type="entry name" value="P-loop containing nucleoside triphosphate hydrolases"/>
    <property type="match status" value="1"/>
</dbReference>
<dbReference type="SUPFAM" id="SSF50447">
    <property type="entry name" value="Translation proteins"/>
    <property type="match status" value="1"/>
</dbReference>
<dbReference type="PROSITE" id="PS51722">
    <property type="entry name" value="G_TR_2"/>
    <property type="match status" value="1"/>
</dbReference>